<comment type="function">
    <text evidence="1">Catalyzes the GTP-dependent ribosomal translocation step during translation elongation. During this step, the ribosome changes from the pre-translocational (PRE) to the post-translocational (POST) state as the newly formed A-site-bound peptidyl-tRNA and P-site-bound deacylated tRNA move to the P and E sites, respectively. Catalyzes the coordinated movement of the two tRNA molecules, the mRNA and conformational changes in the ribosome.</text>
</comment>
<comment type="subcellular location">
    <subcellularLocation>
        <location evidence="1">Cytoplasm</location>
    </subcellularLocation>
</comment>
<comment type="similarity">
    <text evidence="1">Belongs to the TRAFAC class translation factor GTPase superfamily. Classic translation factor GTPase family. EF-G/EF-2 subfamily.</text>
</comment>
<gene>
    <name evidence="1" type="primary">fusA</name>
    <name type="ordered locus">FTT_0323</name>
</gene>
<proteinExistence type="inferred from homology"/>
<sequence>MPRNTALEKYRNIGICAHVDAGKTTTTERILFYTGLSHKIGEVHDGAATMDWMEQEQERGITITSAATTTFWSGMDQQFEKHRINIIDTPGHVDFTIEVERSLRVLDGAVVVFCGSSGVEPQSETVWRQANKYGVPRIVFVNKMDRSGADFERVCAQIKTRLKANVVPVQLNIGAEEDFKGVIDLIRMKAIMWNEEDMGLTYELVDIPADLQDRAEELRMEMIEAAAEASEELMEKYLEGGELSEDEIHQGLRARVLNNEIVLAFCGSAFKNKGVQAVLDGVVRYLPAPNQVPAIKCETEDGEPASRPSSDDAPFAALAFKLATDPFVGNLTFIRVYSGVLKSGDAVYNPVKGKKERVGRIVQMHANKRDEIKEVRAGDIAACIGLKDVTTGDTLCDQEDVVILEKMDFPEPVISVAVEPKSKADQEKMSIALGKLAAEDPSFRVKTDEESGQTIISGMGELHLDIVVDRMRREFKVEANVGNPQVAYRETIRSKVEQEAKFVRQSGGRGQYGHVFVRFEPLDEVDENGEAKVFKFVDEVVGGVVPKEYIGSVAKGIEEQLNNGVLAGYPMIGVKATLYDGSYHDVDSSEMAFKIAGSMALKEGAKKANACILEPIMKVEVVTPEDYLGDVMGDLNRRRGIIEGMDENPSGRVINALVPLAEMFGYATNVRSISQGRASFSMEFKKYAEVPNNIADEIIKSHNS</sequence>
<accession>Q5NHX0</accession>
<name>EFG_FRATT</name>
<organism>
    <name type="scientific">Francisella tularensis subsp. tularensis (strain SCHU S4 / Schu 4)</name>
    <dbReference type="NCBI Taxonomy" id="177416"/>
    <lineage>
        <taxon>Bacteria</taxon>
        <taxon>Pseudomonadati</taxon>
        <taxon>Pseudomonadota</taxon>
        <taxon>Gammaproteobacteria</taxon>
        <taxon>Thiotrichales</taxon>
        <taxon>Francisellaceae</taxon>
        <taxon>Francisella</taxon>
    </lineage>
</organism>
<keyword id="KW-0963">Cytoplasm</keyword>
<keyword id="KW-0251">Elongation factor</keyword>
<keyword id="KW-0342">GTP-binding</keyword>
<keyword id="KW-0547">Nucleotide-binding</keyword>
<keyword id="KW-0648">Protein biosynthesis</keyword>
<keyword id="KW-1185">Reference proteome</keyword>
<reference key="1">
    <citation type="journal article" date="2005" name="Nat. Genet.">
        <title>The complete genome sequence of Francisella tularensis, the causative agent of tularemia.</title>
        <authorList>
            <person name="Larsson P."/>
            <person name="Oyston P.C.F."/>
            <person name="Chain P."/>
            <person name="Chu M.C."/>
            <person name="Duffield M."/>
            <person name="Fuxelius H.-H."/>
            <person name="Garcia E."/>
            <person name="Haelltorp G."/>
            <person name="Johansson D."/>
            <person name="Isherwood K.E."/>
            <person name="Karp P.D."/>
            <person name="Larsson E."/>
            <person name="Liu Y."/>
            <person name="Michell S."/>
            <person name="Prior J."/>
            <person name="Prior R."/>
            <person name="Malfatti S."/>
            <person name="Sjoestedt A."/>
            <person name="Svensson K."/>
            <person name="Thompson N."/>
            <person name="Vergez L."/>
            <person name="Wagg J.K."/>
            <person name="Wren B.W."/>
            <person name="Lindler L.E."/>
            <person name="Andersson S.G.E."/>
            <person name="Forsman M."/>
            <person name="Titball R.W."/>
        </authorList>
    </citation>
    <scope>NUCLEOTIDE SEQUENCE [LARGE SCALE GENOMIC DNA]</scope>
    <source>
        <strain>SCHU S4 / Schu 4</strain>
    </source>
</reference>
<protein>
    <recommendedName>
        <fullName evidence="1">Elongation factor G</fullName>
        <shortName evidence="1">EF-G</shortName>
    </recommendedName>
</protein>
<evidence type="ECO:0000255" key="1">
    <source>
        <dbReference type="HAMAP-Rule" id="MF_00054"/>
    </source>
</evidence>
<feature type="chain" id="PRO_0000091124" description="Elongation factor G">
    <location>
        <begin position="1"/>
        <end position="704"/>
    </location>
</feature>
<feature type="domain" description="tr-type G">
    <location>
        <begin position="8"/>
        <end position="290"/>
    </location>
</feature>
<feature type="binding site" evidence="1">
    <location>
        <begin position="17"/>
        <end position="24"/>
    </location>
    <ligand>
        <name>GTP</name>
        <dbReference type="ChEBI" id="CHEBI:37565"/>
    </ligand>
</feature>
<feature type="binding site" evidence="1">
    <location>
        <begin position="88"/>
        <end position="92"/>
    </location>
    <ligand>
        <name>GTP</name>
        <dbReference type="ChEBI" id="CHEBI:37565"/>
    </ligand>
</feature>
<feature type="binding site" evidence="1">
    <location>
        <begin position="142"/>
        <end position="145"/>
    </location>
    <ligand>
        <name>GTP</name>
        <dbReference type="ChEBI" id="CHEBI:37565"/>
    </ligand>
</feature>
<dbReference type="EMBL" id="AJ749949">
    <property type="protein sequence ID" value="CAG44956.1"/>
    <property type="molecule type" value="Genomic_DNA"/>
</dbReference>
<dbReference type="RefSeq" id="WP_003028885.1">
    <property type="nucleotide sequence ID" value="NC_006570.2"/>
</dbReference>
<dbReference type="RefSeq" id="YP_169372.1">
    <property type="nucleotide sequence ID" value="NC_006570.2"/>
</dbReference>
<dbReference type="SMR" id="Q5NHX0"/>
<dbReference type="IntAct" id="Q5NHX0">
    <property type="interactions" value="15"/>
</dbReference>
<dbReference type="STRING" id="177416.FTT_0323"/>
<dbReference type="DNASU" id="3191127"/>
<dbReference type="EnsemblBacteria" id="CAG44956">
    <property type="protein sequence ID" value="CAG44956"/>
    <property type="gene ID" value="FTT_0323"/>
</dbReference>
<dbReference type="KEGG" id="ftu:FTT_0323"/>
<dbReference type="eggNOG" id="COG0480">
    <property type="taxonomic scope" value="Bacteria"/>
</dbReference>
<dbReference type="OrthoDB" id="5619066at2"/>
<dbReference type="Proteomes" id="UP000001174">
    <property type="component" value="Chromosome"/>
</dbReference>
<dbReference type="GO" id="GO:0005737">
    <property type="term" value="C:cytoplasm"/>
    <property type="evidence" value="ECO:0007669"/>
    <property type="project" value="UniProtKB-SubCell"/>
</dbReference>
<dbReference type="GO" id="GO:0005525">
    <property type="term" value="F:GTP binding"/>
    <property type="evidence" value="ECO:0007669"/>
    <property type="project" value="UniProtKB-UniRule"/>
</dbReference>
<dbReference type="GO" id="GO:0003924">
    <property type="term" value="F:GTPase activity"/>
    <property type="evidence" value="ECO:0007669"/>
    <property type="project" value="InterPro"/>
</dbReference>
<dbReference type="GO" id="GO:0097216">
    <property type="term" value="F:guanosine tetraphosphate binding"/>
    <property type="evidence" value="ECO:0007669"/>
    <property type="project" value="UniProtKB-ARBA"/>
</dbReference>
<dbReference type="GO" id="GO:0003746">
    <property type="term" value="F:translation elongation factor activity"/>
    <property type="evidence" value="ECO:0007669"/>
    <property type="project" value="UniProtKB-UniRule"/>
</dbReference>
<dbReference type="GO" id="GO:0032790">
    <property type="term" value="P:ribosome disassembly"/>
    <property type="evidence" value="ECO:0007669"/>
    <property type="project" value="TreeGrafter"/>
</dbReference>
<dbReference type="CDD" id="cd01886">
    <property type="entry name" value="EF-G"/>
    <property type="match status" value="1"/>
</dbReference>
<dbReference type="CDD" id="cd16262">
    <property type="entry name" value="EFG_III"/>
    <property type="match status" value="1"/>
</dbReference>
<dbReference type="CDD" id="cd01434">
    <property type="entry name" value="EFG_mtEFG1_IV"/>
    <property type="match status" value="1"/>
</dbReference>
<dbReference type="CDD" id="cd03713">
    <property type="entry name" value="EFG_mtEFG_C"/>
    <property type="match status" value="1"/>
</dbReference>
<dbReference type="CDD" id="cd04088">
    <property type="entry name" value="EFG_mtEFG_II"/>
    <property type="match status" value="1"/>
</dbReference>
<dbReference type="FunFam" id="2.40.30.10:FF:000006">
    <property type="entry name" value="Elongation factor G"/>
    <property type="match status" value="1"/>
</dbReference>
<dbReference type="FunFam" id="3.30.230.10:FF:000003">
    <property type="entry name" value="Elongation factor G"/>
    <property type="match status" value="1"/>
</dbReference>
<dbReference type="FunFam" id="3.30.70.240:FF:000001">
    <property type="entry name" value="Elongation factor G"/>
    <property type="match status" value="1"/>
</dbReference>
<dbReference type="FunFam" id="3.30.70.870:FF:000001">
    <property type="entry name" value="Elongation factor G"/>
    <property type="match status" value="1"/>
</dbReference>
<dbReference type="FunFam" id="3.40.50.300:FF:000029">
    <property type="entry name" value="Elongation factor G"/>
    <property type="match status" value="1"/>
</dbReference>
<dbReference type="Gene3D" id="3.30.230.10">
    <property type="match status" value="1"/>
</dbReference>
<dbReference type="Gene3D" id="3.30.70.240">
    <property type="match status" value="1"/>
</dbReference>
<dbReference type="Gene3D" id="3.30.70.870">
    <property type="entry name" value="Elongation Factor G (Translational Gtpase), domain 3"/>
    <property type="match status" value="1"/>
</dbReference>
<dbReference type="Gene3D" id="3.40.50.300">
    <property type="entry name" value="P-loop containing nucleotide triphosphate hydrolases"/>
    <property type="match status" value="1"/>
</dbReference>
<dbReference type="Gene3D" id="2.40.30.10">
    <property type="entry name" value="Translation factors"/>
    <property type="match status" value="1"/>
</dbReference>
<dbReference type="HAMAP" id="MF_00054_B">
    <property type="entry name" value="EF_G_EF_2_B"/>
    <property type="match status" value="1"/>
</dbReference>
<dbReference type="InterPro" id="IPR041095">
    <property type="entry name" value="EFG_II"/>
</dbReference>
<dbReference type="InterPro" id="IPR009022">
    <property type="entry name" value="EFG_III"/>
</dbReference>
<dbReference type="InterPro" id="IPR035647">
    <property type="entry name" value="EFG_III/V"/>
</dbReference>
<dbReference type="InterPro" id="IPR047872">
    <property type="entry name" value="EFG_IV"/>
</dbReference>
<dbReference type="InterPro" id="IPR035649">
    <property type="entry name" value="EFG_V"/>
</dbReference>
<dbReference type="InterPro" id="IPR000640">
    <property type="entry name" value="EFG_V-like"/>
</dbReference>
<dbReference type="InterPro" id="IPR004161">
    <property type="entry name" value="EFTu-like_2"/>
</dbReference>
<dbReference type="InterPro" id="IPR031157">
    <property type="entry name" value="G_TR_CS"/>
</dbReference>
<dbReference type="InterPro" id="IPR027417">
    <property type="entry name" value="P-loop_NTPase"/>
</dbReference>
<dbReference type="InterPro" id="IPR020568">
    <property type="entry name" value="Ribosomal_Su5_D2-typ_SF"/>
</dbReference>
<dbReference type="InterPro" id="IPR014721">
    <property type="entry name" value="Ribsml_uS5_D2-typ_fold_subgr"/>
</dbReference>
<dbReference type="InterPro" id="IPR005225">
    <property type="entry name" value="Small_GTP-bd"/>
</dbReference>
<dbReference type="InterPro" id="IPR000795">
    <property type="entry name" value="T_Tr_GTP-bd_dom"/>
</dbReference>
<dbReference type="InterPro" id="IPR009000">
    <property type="entry name" value="Transl_B-barrel_sf"/>
</dbReference>
<dbReference type="InterPro" id="IPR004540">
    <property type="entry name" value="Transl_elong_EFG/EF2"/>
</dbReference>
<dbReference type="InterPro" id="IPR005517">
    <property type="entry name" value="Transl_elong_EFG/EF2_IV"/>
</dbReference>
<dbReference type="NCBIfam" id="TIGR00484">
    <property type="entry name" value="EF-G"/>
    <property type="match status" value="1"/>
</dbReference>
<dbReference type="NCBIfam" id="NF009381">
    <property type="entry name" value="PRK12740.1-5"/>
    <property type="match status" value="1"/>
</dbReference>
<dbReference type="NCBIfam" id="TIGR00231">
    <property type="entry name" value="small_GTP"/>
    <property type="match status" value="1"/>
</dbReference>
<dbReference type="PANTHER" id="PTHR43261:SF1">
    <property type="entry name" value="RIBOSOME-RELEASING FACTOR 2, MITOCHONDRIAL"/>
    <property type="match status" value="1"/>
</dbReference>
<dbReference type="PANTHER" id="PTHR43261">
    <property type="entry name" value="TRANSLATION ELONGATION FACTOR G-RELATED"/>
    <property type="match status" value="1"/>
</dbReference>
<dbReference type="Pfam" id="PF00679">
    <property type="entry name" value="EFG_C"/>
    <property type="match status" value="1"/>
</dbReference>
<dbReference type="Pfam" id="PF14492">
    <property type="entry name" value="EFG_III"/>
    <property type="match status" value="1"/>
</dbReference>
<dbReference type="Pfam" id="PF03764">
    <property type="entry name" value="EFG_IV"/>
    <property type="match status" value="1"/>
</dbReference>
<dbReference type="Pfam" id="PF00009">
    <property type="entry name" value="GTP_EFTU"/>
    <property type="match status" value="1"/>
</dbReference>
<dbReference type="Pfam" id="PF03144">
    <property type="entry name" value="GTP_EFTU_D2"/>
    <property type="match status" value="1"/>
</dbReference>
<dbReference type="PRINTS" id="PR00315">
    <property type="entry name" value="ELONGATNFCT"/>
</dbReference>
<dbReference type="SMART" id="SM00838">
    <property type="entry name" value="EFG_C"/>
    <property type="match status" value="1"/>
</dbReference>
<dbReference type="SMART" id="SM00889">
    <property type="entry name" value="EFG_IV"/>
    <property type="match status" value="1"/>
</dbReference>
<dbReference type="SUPFAM" id="SSF54980">
    <property type="entry name" value="EF-G C-terminal domain-like"/>
    <property type="match status" value="2"/>
</dbReference>
<dbReference type="SUPFAM" id="SSF52540">
    <property type="entry name" value="P-loop containing nucleoside triphosphate hydrolases"/>
    <property type="match status" value="1"/>
</dbReference>
<dbReference type="SUPFAM" id="SSF54211">
    <property type="entry name" value="Ribosomal protein S5 domain 2-like"/>
    <property type="match status" value="1"/>
</dbReference>
<dbReference type="SUPFAM" id="SSF50447">
    <property type="entry name" value="Translation proteins"/>
    <property type="match status" value="1"/>
</dbReference>
<dbReference type="PROSITE" id="PS00301">
    <property type="entry name" value="G_TR_1"/>
    <property type="match status" value="1"/>
</dbReference>
<dbReference type="PROSITE" id="PS51722">
    <property type="entry name" value="G_TR_2"/>
    <property type="match status" value="1"/>
</dbReference>